<protein>
    <recommendedName>
        <fullName evidence="17">CCAAT/enhancer-binding protein homolog 1</fullName>
    </recommendedName>
</protein>
<organism evidence="16">
    <name type="scientific">Caenorhabditis elegans</name>
    <dbReference type="NCBI Taxonomy" id="6239"/>
    <lineage>
        <taxon>Eukaryota</taxon>
        <taxon>Metazoa</taxon>
        <taxon>Ecdysozoa</taxon>
        <taxon>Nematoda</taxon>
        <taxon>Chromadorea</taxon>
        <taxon>Rhabditida</taxon>
        <taxon>Rhabditina</taxon>
        <taxon>Rhabditomorpha</taxon>
        <taxon>Rhabditoidea</taxon>
        <taxon>Rhabditidae</taxon>
        <taxon>Peloderinae</taxon>
        <taxon>Caenorhabditis</taxon>
    </lineage>
</organism>
<gene>
    <name evidence="17" type="primary">cebp-1</name>
    <name evidence="17" type="ORF">D1005.3</name>
</gene>
<reference evidence="16" key="1">
    <citation type="journal article" date="1998" name="Science">
        <title>Genome sequence of the nematode C. elegans: a platform for investigating biology.</title>
        <authorList>
            <consortium name="The C. elegans sequencing consortium"/>
        </authorList>
    </citation>
    <scope>NUCLEOTIDE SEQUENCE [LARGE SCALE GENOMIC DNA]</scope>
    <source>
        <strain evidence="16">Bristol N2</strain>
    </source>
</reference>
<reference evidence="13" key="2">
    <citation type="journal article" date="2009" name="Cell">
        <title>The DLK-1 kinase promotes mRNA stability and local translation in C. elegans synapses and axon regeneration.</title>
        <authorList>
            <person name="Yan D."/>
            <person name="Wu Z."/>
            <person name="Chisholm A.D."/>
            <person name="Jin Y."/>
        </authorList>
    </citation>
    <scope>FUNCTION</scope>
    <scope>SUBCELLULAR LOCATION</scope>
    <scope>TISSUE SPECIFICITY</scope>
    <scope>MUTAGENESIS OF SER-250 AND ARG-251</scope>
</reference>
<reference evidence="13" key="3">
    <citation type="journal article" date="2011" name="Proc. Natl. Acad. Sci. U.S.A.">
        <title>Microtubule depolymerization in Caenorhabditis elegans touch receptor neurons reduces gene expression through a p38 MAPK pathway.</title>
        <authorList>
            <person name="Bounoutas A."/>
            <person name="Kratz J."/>
            <person name="Emtage L."/>
            <person name="Ma C."/>
            <person name="Nguyen K.C."/>
            <person name="Chalfie M."/>
        </authorList>
    </citation>
    <scope>FUNCTION</scope>
    <scope>MUTAGENESIS OF ALA-285</scope>
</reference>
<reference evidence="13" key="4">
    <citation type="journal article" date="2015" name="PLoS Genet.">
        <title>Axon regeneration is regulated by Ets-C/EBP transcription complexes generated by activation of the cAMP/Ca2+ signaling pathways.</title>
        <authorList>
            <person name="Li C."/>
            <person name="Hisamoto N."/>
            <person name="Matsumoto K."/>
        </authorList>
    </citation>
    <scope>FUNCTION</scope>
    <scope>INTERACTION WITH ETS-4</scope>
</reference>
<reference evidence="13" key="5">
    <citation type="journal article" date="2016" name="BMC Biol.">
        <title>Coordinated inhibition of C/EBP by Tribbles in multiple tissues is essential for Caenorhabditis elegans development.</title>
        <authorList>
            <person name="Kim K.W."/>
            <person name="Thakur N."/>
            <person name="Piggott C.A."/>
            <person name="Omi S."/>
            <person name="Polanowska J."/>
            <person name="Jin Y."/>
            <person name="Pujol N."/>
        </authorList>
    </citation>
    <scope>FUNCTION</scope>
    <scope>INTERACTION WITH NIPI-3</scope>
    <scope>DEVELOPMENTAL STAGE</scope>
</reference>
<reference evidence="13" key="6">
    <citation type="journal article" date="2016" name="BMC Biol.">
        <title>Tribbles ortholog NIPI-3 and bZIP transcription factor CEBP-1 regulate a Caenorhabditis elegans intestinal immune surveillance pathway.</title>
        <authorList>
            <person name="McEwan D.L."/>
            <person name="Feinbaum R.L."/>
            <person name="Stroustrup N."/>
            <person name="Haas W."/>
            <person name="Conery A.L."/>
            <person name="Anselmo A."/>
            <person name="Sadreyev R."/>
            <person name="Ausubel F.M."/>
        </authorList>
    </citation>
    <scope>FUNCTION</scope>
    <scope>DISRUPTION PHENOTYPE</scope>
    <scope>MUTAGENESIS OF ALA-246</scope>
</reference>
<reference evidence="13" key="7">
    <citation type="journal article" date="2017" name="PLoS Genet.">
        <title>A conserved mitochondrial surveillance pathway is required for defense against Pseudomonas aeruginosa.</title>
        <authorList>
            <person name="Tjahjono E."/>
            <person name="Kirienko N.V."/>
        </authorList>
    </citation>
    <scope>FUNCTION</scope>
    <scope>DISRUPTION PHENOTYPE</scope>
</reference>
<reference evidence="13" key="8">
    <citation type="journal article" date="2019" name="Front. Cell. Neurosci.">
        <title>Functional Dissection of C. elegans bZip-Protein CEBP-1 Reveals Novel Structural Motifs Required for Axon Regeneration and Nuclear Import.</title>
        <authorList>
            <person name="Malinow R.A."/>
            <person name="Ying P."/>
            <person name="Koorman T."/>
            <person name="Boxem M."/>
            <person name="Jin Y."/>
            <person name="Kim K.W."/>
        </authorList>
    </citation>
    <scope>FUNCTION</scope>
    <scope>INTERACTION WITH IMA-3</scope>
    <scope>SUBCELLULAR LOCATION</scope>
    <scope>MUTAGENESIS OF SER-53; LEU-54; GLN-62; ARG-63; ASP-64 AND 162-LYS--ARG-169</scope>
</reference>
<reference evidence="13" key="9">
    <citation type="journal article" date="2020" name="Toxicol. Sci.">
        <title>Methylmercury Induces Metabolic Alterations in Caenorhabditis elegans: Role for C/EBP Transcription Factor.</title>
        <authorList>
            <person name="Caito S.W."/>
            <person name="Newell-Caito J."/>
            <person name="Martell M."/>
            <person name="Crawford N."/>
            <person name="Aschner M."/>
        </authorList>
    </citation>
    <scope>FUNCTION</scope>
    <scope>INDUCTION</scope>
</reference>
<reference evidence="13" key="10">
    <citation type="journal article" date="2021" name="Cell Rep.">
        <title>Tribbles pseudokinase NIPI-3 regulates intestinal immunity in Caenorhabditis elegans by controlling SKN-1/Nrf activity.</title>
        <authorList>
            <person name="Wu C."/>
            <person name="Karakuzu O."/>
            <person name="Garsin D.A."/>
        </authorList>
    </citation>
    <scope>FUNCTION</scope>
</reference>
<keyword id="KW-0966">Cell projection</keyword>
<keyword id="KW-0963">Cytoplasm</keyword>
<keyword id="KW-0217">Developmental protein</keyword>
<keyword id="KW-0238">DNA-binding</keyword>
<keyword id="KW-0539">Nucleus</keyword>
<keyword id="KW-1185">Reference proteome</keyword>
<keyword id="KW-0770">Synapse</keyword>
<keyword id="KW-0804">Transcription</keyword>
<keyword id="KW-0805">Transcription regulation</keyword>
<evidence type="ECO:0000250" key="1">
    <source>
        <dbReference type="UniProtKB" id="P49716"/>
    </source>
</evidence>
<evidence type="ECO:0000255" key="2">
    <source>
        <dbReference type="PROSITE-ProRule" id="PRU00978"/>
    </source>
</evidence>
<evidence type="ECO:0000256" key="3">
    <source>
        <dbReference type="SAM" id="MobiDB-lite"/>
    </source>
</evidence>
<evidence type="ECO:0000269" key="4">
    <source>
    </source>
</evidence>
<evidence type="ECO:0000269" key="5">
    <source>
    </source>
</evidence>
<evidence type="ECO:0000269" key="6">
    <source>
    </source>
</evidence>
<evidence type="ECO:0000269" key="7">
    <source>
    </source>
</evidence>
<evidence type="ECO:0000269" key="8">
    <source>
    </source>
</evidence>
<evidence type="ECO:0000269" key="9">
    <source>
    </source>
</evidence>
<evidence type="ECO:0000269" key="10">
    <source>
    </source>
</evidence>
<evidence type="ECO:0000269" key="11">
    <source>
    </source>
</evidence>
<evidence type="ECO:0000269" key="12">
    <source>
    </source>
</evidence>
<evidence type="ECO:0000305" key="13"/>
<evidence type="ECO:0000305" key="14">
    <source>
    </source>
</evidence>
<evidence type="ECO:0000305" key="15">
    <source>
    </source>
</evidence>
<evidence type="ECO:0000312" key="16">
    <source>
        <dbReference type="Proteomes" id="UP000001940"/>
    </source>
</evidence>
<evidence type="ECO:0000312" key="17">
    <source>
        <dbReference type="WormBase" id="D1005.3"/>
    </source>
</evidence>
<name>CEBP1_CAEEL</name>
<proteinExistence type="evidence at protein level"/>
<comment type="function">
    <text evidence="1 4 5 6 7 8 9 10 11 12">Transcription factor (By similarity). Binds to promoter regions of target genes, perhaps at the motif 5'-[AGCT]TT[AGT][TC]GAAA[ACT]-3' (PubMed:27927209). Modulates expression of genes involved in development and in stress responses, including those regulating the p38/MAPK signaling pathways such as MAPKK sek-1 and phosphatase vhp-1 (PubMed:27927209, PubMed:34407394). Involved in innate immunity (PubMed:27927200, PubMed:28662060, PubMed:34407394). Plays a role in repressing the response to infection by the Gram-negative bacterium P.aeruginosa, perhaps acting independently of the pmk-1 or pmk-3 p38/MAPK pathways (PubMed:27927200). However, also plays a protective role in the response to infection by P.aeruginosa (PubMed:28662060). Required in axonal regrowth following injury and synaptogenesis (PubMed:19737525, PubMed:26484536, PubMed:31417366). Following axon injury, in concert with transcription factor ets-4, activates expression of receptor tyrosine kinase svh-2 (PubMed:26484536). May function downstream of the Ca2+-activated p38/MAPK pathway to promote axon regeneration (PubMed:26484536). Plays a role in modulating polymerization of neuronal microtubules (PubMed:21368137). Involved in modulating lipid homeostasis (PubMed:31851340).</text>
</comment>
<comment type="subunit">
    <text evidence="6 8 10">May interact with transcription factor ets-4 (PubMed:26484536). May interact (via N-terminus) with nipi-3 (PubMed:27927209). May interact (via N-terminus) with importin subunit alpha ima-3 (PubMed:31417366).</text>
</comment>
<comment type="interaction">
    <interactant intactId="EBI-326791">
        <id>Q18909</id>
    </interactant>
    <interactant intactId="EBI-6777775">
        <id>H2L0N3</id>
        <label>zip-4</label>
    </interactant>
    <organismsDiffer>false</organismsDiffer>
    <experiments>2</experiments>
</comment>
<comment type="subcellular location">
    <subcellularLocation>
        <location evidence="4">Synapse</location>
    </subcellularLocation>
    <subcellularLocation>
        <location evidence="4">Cytoplasm</location>
    </subcellularLocation>
    <subcellularLocation>
        <location evidence="4 10">Nucleus</location>
    </subcellularLocation>
    <subcellularLocation>
        <location evidence="4">Cell projection</location>
        <location evidence="4">Axon</location>
    </subcellularLocation>
    <text evidence="10">Localization to nucleus dependent partially upon importin ima-3.</text>
</comment>
<comment type="tissue specificity">
    <text evidence="4">Expressed in touch and motor neurons.</text>
</comment>
<comment type="developmental stage">
    <text evidence="8">Widely expressed in most postembryonic tissues, including epidermis, muscles, pharynx, intestine and neurons.</text>
</comment>
<comment type="induction">
    <text evidence="11">In response to methylmercury.</text>
</comment>
<comment type="disruption phenotype">
    <text evidence="7 9">RNAi-mediated knockdown suppresses lifespan reduction caused by infection by the Gram-negative bacterium P.aeruginosa when combined with simultaneous knockdown of nipi-3 (PubMed:27927200). Knockdown reduces survival due to infection by the Gram-negative bacterium P.aeruginosa in a valine--tRNA ligase glp-4 mutant background (PubMed:28662060).</text>
</comment>
<comment type="similarity">
    <text evidence="13">Belongs to the bZIP family. C/EBP subfamily.</text>
</comment>
<comment type="caution">
    <text evidence="7 9 14 15">Plays a role in repressing the response to infection by the Gram-negative bacterium P.aeruginosa (PubMed:27927200). However, is also reported to play a protective role in the response to infection by P.aeruginosa (PubMed:28662060). These differences may be due to conditions of infection or perhaps genetic background.</text>
</comment>
<accession>Q18909</accession>
<feature type="chain" id="PRO_0000455762" description="CCAAT/enhancer-binding protein homolog 1">
    <location>
        <begin position="1"/>
        <end position="319"/>
    </location>
</feature>
<feature type="domain" description="bZIP" evidence="2">
    <location>
        <begin position="233"/>
        <end position="308"/>
    </location>
</feature>
<feature type="region of interest" description="N' domain; required for axon regeneration" evidence="10">
    <location>
        <begin position="53"/>
        <end position="67"/>
    </location>
</feature>
<feature type="region of interest" description="Disordered" evidence="3">
    <location>
        <begin position="163"/>
        <end position="319"/>
    </location>
</feature>
<feature type="region of interest" description="Basic motif" evidence="2">
    <location>
        <begin position="237"/>
        <end position="271"/>
    </location>
</feature>
<feature type="region of interest" description="Leucine-zipper" evidence="2">
    <location>
        <begin position="275"/>
        <end position="308"/>
    </location>
</feature>
<feature type="compositionally biased region" description="Basic and acidic residues" evidence="3">
    <location>
        <begin position="171"/>
        <end position="181"/>
    </location>
</feature>
<feature type="compositionally biased region" description="Acidic residues" evidence="3">
    <location>
        <begin position="182"/>
        <end position="198"/>
    </location>
</feature>
<feature type="compositionally biased region" description="Basic and acidic residues" evidence="3">
    <location>
        <begin position="225"/>
        <end position="248"/>
    </location>
</feature>
<feature type="compositionally biased region" description="Basic and acidic residues" evidence="3">
    <location>
        <begin position="255"/>
        <end position="274"/>
    </location>
</feature>
<feature type="compositionally biased region" description="Basic and acidic residues" evidence="3">
    <location>
        <begin position="281"/>
        <end position="291"/>
    </location>
</feature>
<feature type="compositionally biased region" description="Basic and acidic residues" evidence="3">
    <location>
        <begin position="302"/>
        <end position="319"/>
    </location>
</feature>
<feature type="mutagenesis site" description="In ju1518; Suppresses developmental arrest in a nipi-3 mutant background." evidence="10">
    <original>S</original>
    <variation>F</variation>
    <location>
        <position position="53"/>
    </location>
</feature>
<feature type="mutagenesis site" description="In ju1519; Suppresses developmental arrest in a nipi-3 mutant background." evidence="10">
    <original>L</original>
    <variation>F</variation>
    <location>
        <position position="54"/>
    </location>
</feature>
<feature type="mutagenesis site" description="In ju1590; Blocks injury-induced axon regrowth." evidence="10">
    <location>
        <position position="62"/>
    </location>
</feature>
<feature type="mutagenesis site" description="In ju634; Blocks injury-induced axon regrowth. Suppresses developmental arrest in a nipi-3 mutant background." evidence="10">
    <original>R</original>
    <variation>P</variation>
    <location>
        <position position="63"/>
    </location>
</feature>
<feature type="mutagenesis site" description="In ju1521; Blocks injury-induced axon regrowth. Suppresses developmental arrest in a nipi-3 mutant background." evidence="10">
    <original>D</original>
    <variation>N</variation>
    <location>
        <position position="64"/>
    </location>
</feature>
<feature type="mutagenesis site" description="Abolishes interaction with ima-3 in vitro." evidence="10">
    <original>KTRRAVKR</original>
    <variation>ATARAVAA</variation>
    <location>
        <begin position="162"/>
        <end position="169"/>
    </location>
</feature>
<feature type="mutagenesis site" description="In ag33; Resistant to effects of toxin ToxA from Gram-positive bacterium P.aeruginosa. Suppresses lifespan reduction caused by P.aeruginosa in a nipi-3 mutant background." evidence="7">
    <original>A</original>
    <variation>V</variation>
    <location>
        <position position="246"/>
    </location>
</feature>
<feature type="mutagenesis site" description="In ju640; Suppresses neuronal defects in a E3 ubiquitin-protein ligase rpm-1 mutant background." evidence="4">
    <original>S</original>
    <variation>L</variation>
    <location>
        <position position="250"/>
    </location>
</feature>
<feature type="mutagenesis site" description="In ju659; Suppresses neuronal defects in a E3 ubiquitin-protein ligase rpm-1 mutant background." evidence="4">
    <original>R</original>
    <variation>C</variation>
    <location>
        <position position="251"/>
    </location>
</feature>
<feature type="mutagenesis site" description="In u819; Suppresses microtubule disruption in touch receptor neurons caused by colchicine." evidence="5">
    <original>A</original>
    <variation>V</variation>
    <location>
        <position position="285"/>
    </location>
</feature>
<dbReference type="EMBL" id="BX284606">
    <property type="protein sequence ID" value="CCD68278.2"/>
    <property type="molecule type" value="Genomic_DNA"/>
</dbReference>
<dbReference type="RefSeq" id="NP_508276.2">
    <property type="nucleotide sequence ID" value="NM_075875.7"/>
</dbReference>
<dbReference type="SMR" id="Q18909"/>
<dbReference type="DIP" id="DIP-25681N"/>
<dbReference type="FunCoup" id="Q18909">
    <property type="interactions" value="124"/>
</dbReference>
<dbReference type="IntAct" id="Q18909">
    <property type="interactions" value="3"/>
</dbReference>
<dbReference type="STRING" id="6239.D1005.3.2"/>
<dbReference type="PaxDb" id="6239-D1005.3"/>
<dbReference type="PeptideAtlas" id="Q18909"/>
<dbReference type="EnsemblMetazoa" id="D1005.3.1">
    <property type="protein sequence ID" value="D1005.3.1"/>
    <property type="gene ID" value="WBGene00016997"/>
</dbReference>
<dbReference type="GeneID" id="180481"/>
<dbReference type="KEGG" id="cel:CELE_D1005.3"/>
<dbReference type="UCSC" id="D1005.3">
    <property type="organism name" value="c. elegans"/>
</dbReference>
<dbReference type="AGR" id="WB:WBGene00016997"/>
<dbReference type="CTD" id="180481"/>
<dbReference type="WormBase" id="D1005.3">
    <property type="protein sequence ID" value="CE47425"/>
    <property type="gene ID" value="WBGene00016997"/>
    <property type="gene designation" value="cebp-1"/>
</dbReference>
<dbReference type="eggNOG" id="KOG3119">
    <property type="taxonomic scope" value="Eukaryota"/>
</dbReference>
<dbReference type="GeneTree" id="ENSGT00940000171291"/>
<dbReference type="HOGENOM" id="CLU_075902_0_0_1"/>
<dbReference type="InParanoid" id="Q18909"/>
<dbReference type="OMA" id="YKMNCEV"/>
<dbReference type="OrthoDB" id="10039716at2759"/>
<dbReference type="PRO" id="PR:Q18909"/>
<dbReference type="Proteomes" id="UP000001940">
    <property type="component" value="Chromosome X"/>
</dbReference>
<dbReference type="Bgee" id="WBGene00016997">
    <property type="expression patterns" value="Expressed in pharyngeal muscle cell (C elegans) and 3 other cell types or tissues"/>
</dbReference>
<dbReference type="GO" id="GO:0030424">
    <property type="term" value="C:axon"/>
    <property type="evidence" value="ECO:0007669"/>
    <property type="project" value="UniProtKB-SubCell"/>
</dbReference>
<dbReference type="GO" id="GO:0005737">
    <property type="term" value="C:cytoplasm"/>
    <property type="evidence" value="ECO:0000314"/>
    <property type="project" value="WormBase"/>
</dbReference>
<dbReference type="GO" id="GO:0005634">
    <property type="term" value="C:nucleus"/>
    <property type="evidence" value="ECO:0000314"/>
    <property type="project" value="WormBase"/>
</dbReference>
<dbReference type="GO" id="GO:0090575">
    <property type="term" value="C:RNA polymerase II transcription regulator complex"/>
    <property type="evidence" value="ECO:0000314"/>
    <property type="project" value="UniProtKB"/>
</dbReference>
<dbReference type="GO" id="GO:0045202">
    <property type="term" value="C:synapse"/>
    <property type="evidence" value="ECO:0000314"/>
    <property type="project" value="WormBase"/>
</dbReference>
<dbReference type="GO" id="GO:0000981">
    <property type="term" value="F:DNA-binding transcription factor activity, RNA polymerase II-specific"/>
    <property type="evidence" value="ECO:0000315"/>
    <property type="project" value="UniProtKB"/>
</dbReference>
<dbReference type="GO" id="GO:0140297">
    <property type="term" value="F:DNA-binding transcription factor binding"/>
    <property type="evidence" value="ECO:0000353"/>
    <property type="project" value="UniProtKB"/>
</dbReference>
<dbReference type="GO" id="GO:0000978">
    <property type="term" value="F:RNA polymerase II cis-regulatory region sequence-specific DNA binding"/>
    <property type="evidence" value="ECO:0000315"/>
    <property type="project" value="UniProtKB"/>
</dbReference>
<dbReference type="GO" id="GO:0031103">
    <property type="term" value="P:axon regeneration"/>
    <property type="evidence" value="ECO:0000315"/>
    <property type="project" value="UniProtKB"/>
</dbReference>
<dbReference type="GO" id="GO:0050829">
    <property type="term" value="P:defense response to Gram-negative bacterium"/>
    <property type="evidence" value="ECO:0000315"/>
    <property type="project" value="UniProtKB"/>
</dbReference>
<dbReference type="GO" id="GO:0050830">
    <property type="term" value="P:defense response to Gram-positive bacterium"/>
    <property type="evidence" value="ECO:0000315"/>
    <property type="project" value="UniProtKB"/>
</dbReference>
<dbReference type="GO" id="GO:0006351">
    <property type="term" value="P:DNA-templated transcription"/>
    <property type="evidence" value="ECO:0007669"/>
    <property type="project" value="InterPro"/>
</dbReference>
<dbReference type="GO" id="GO:0055088">
    <property type="term" value="P:lipid homeostasis"/>
    <property type="evidence" value="ECO:0000315"/>
    <property type="project" value="UniProtKB"/>
</dbReference>
<dbReference type="GO" id="GO:0046785">
    <property type="term" value="P:microtubule polymerization"/>
    <property type="evidence" value="ECO:0000315"/>
    <property type="project" value="UniProtKB"/>
</dbReference>
<dbReference type="GO" id="GO:0048691">
    <property type="term" value="P:positive regulation of axon extension involved in regeneration"/>
    <property type="evidence" value="ECO:0000315"/>
    <property type="project" value="UniProtKB"/>
</dbReference>
<dbReference type="GO" id="GO:1905944">
    <property type="term" value="P:positive regulation of formation of growth cone in injured axon"/>
    <property type="evidence" value="ECO:0000315"/>
    <property type="project" value="UniProtKB"/>
</dbReference>
<dbReference type="GO" id="GO:0043410">
    <property type="term" value="P:positive regulation of MAPK cascade"/>
    <property type="evidence" value="ECO:0000315"/>
    <property type="project" value="UniProtKB"/>
</dbReference>
<dbReference type="GO" id="GO:0045944">
    <property type="term" value="P:positive regulation of transcription by RNA polymerase II"/>
    <property type="evidence" value="ECO:0000315"/>
    <property type="project" value="UniProtKB"/>
</dbReference>
<dbReference type="GO" id="GO:0048841">
    <property type="term" value="P:regulation of axon extension involved in axon guidance"/>
    <property type="evidence" value="ECO:0000316"/>
    <property type="project" value="UniProtKB"/>
</dbReference>
<dbReference type="GO" id="GO:1905606">
    <property type="term" value="P:regulation of presynapse assembly"/>
    <property type="evidence" value="ECO:0000316"/>
    <property type="project" value="UniProtKB"/>
</dbReference>
<dbReference type="GO" id="GO:0006357">
    <property type="term" value="P:regulation of transcription by RNA polymerase II"/>
    <property type="evidence" value="ECO:0000315"/>
    <property type="project" value="UniProtKB"/>
</dbReference>
<dbReference type="Gene3D" id="1.20.5.170">
    <property type="match status" value="1"/>
</dbReference>
<dbReference type="InterPro" id="IPR046347">
    <property type="entry name" value="bZIP_sf"/>
</dbReference>
<dbReference type="InterPro" id="IPR031106">
    <property type="entry name" value="C/EBP"/>
</dbReference>
<dbReference type="PANTHER" id="PTHR23334">
    <property type="entry name" value="CCAAT/ENHANCER BINDING PROTEIN"/>
    <property type="match status" value="1"/>
</dbReference>
<dbReference type="PANTHER" id="PTHR23334:SF43">
    <property type="entry name" value="CCAAT_ENHANCER-BINDING PROTEIN HOMOLOG 1-RELATED"/>
    <property type="match status" value="1"/>
</dbReference>
<dbReference type="SUPFAM" id="SSF57959">
    <property type="entry name" value="Leucine zipper domain"/>
    <property type="match status" value="1"/>
</dbReference>
<sequence length="319" mass="37076">MYSKLNYSHQKGDQALKHPHLVRLQQSEVRGFTDMPNNGASTSSAGSFARQDSLTIAASLQQRDRERHPVDFMETELDLGDYLQVLHDLDVPTDNVDFDDAELQKCNILYDGEHPYEQPELNGYERHVAYGTGYRVPGDYDQDGYKMNCEVKAETPDFGATKTRRAVKRPVPYDDYQKEYSEESSDMTDNDGSVDDSYFEPKSKKTKSAGLENFKPQTRARKYKLKADEEKAEPTYKLKRARNNDAVRKSRKKAKELQDKKEAEHDKMKRRIAELEGLLQSERDARRRDQDTLEQLLRNKGPMKEQRMPQRHILENFNK</sequence>